<keyword id="KW-0106">Calcium</keyword>
<keyword id="KW-1015">Disulfide bond</keyword>
<keyword id="KW-0325">Glycoprotein</keyword>
<keyword id="KW-0326">Glycosidase</keyword>
<keyword id="KW-1032">Host cell membrane</keyword>
<keyword id="KW-1043">Host membrane</keyword>
<keyword id="KW-0378">Hydrolase</keyword>
<keyword id="KW-0472">Membrane</keyword>
<keyword id="KW-0479">Metal-binding</keyword>
<keyword id="KW-0735">Signal-anchor</keyword>
<keyword id="KW-0812">Transmembrane</keyword>
<keyword id="KW-1133">Transmembrane helix</keyword>
<keyword id="KW-0946">Virion</keyword>
<protein>
    <recommendedName>
        <fullName evidence="1">Neuraminidase</fullName>
        <ecNumber evidence="1">3.2.1.18</ecNumber>
    </recommendedName>
</protein>
<reference key="1">
    <citation type="journal article" date="1998" name="Lancet">
        <title>Human influenza A H5N1 virus related to a highly pathogenic avian influenza virus.</title>
        <authorList>
            <person name="Claas E.C.J."/>
            <person name="Osterhaus A.D."/>
            <person name="van Beek R."/>
            <person name="De Jong J.C."/>
            <person name="Rimmelzwaan G.F."/>
            <person name="Senne D.A."/>
            <person name="Krauss S."/>
            <person name="Shortridge K.F."/>
            <person name="Webster R.G."/>
        </authorList>
    </citation>
    <scope>NUCLEOTIDE SEQUENCE [MRNA]</scope>
</reference>
<reference key="2">
    <citation type="journal article" date="1998" name="Science">
        <title>Characterization of an avian influenza A (H5N1) virus isolated from a child with a fatal respiratory illness.</title>
        <authorList>
            <person name="Subbarao K."/>
            <person name="Klimov A."/>
            <person name="Katz J."/>
            <person name="Regnery H."/>
            <person name="Lim W."/>
            <person name="Hall H."/>
            <person name="Perdue M."/>
            <person name="Swayne D."/>
            <person name="Bender C."/>
            <person name="Huang J."/>
            <person name="Hemphill M."/>
            <person name="Rowe T."/>
            <person name="Shaw M."/>
            <person name="Xu X."/>
            <person name="Fukuda K."/>
            <person name="Cox N."/>
        </authorList>
    </citation>
    <scope>NUCLEOTIDE SEQUENCE [GENOMIC RNA]</scope>
</reference>
<reference key="3">
    <citation type="journal article" date="1998" name="J. Virol.">
        <title>Comparisons of highly virulent H5N1 influenza A viruses isolated from humans and chickens from Hong Kong.</title>
        <authorList>
            <person name="Suarez D.L."/>
            <person name="Perdue M.L."/>
            <person name="Cox N."/>
            <person name="Rowe T."/>
            <person name="Bender C."/>
            <person name="Huang J."/>
            <person name="Swayne D.E."/>
        </authorList>
    </citation>
    <scope>NUCLEOTIDE SEQUENCE [GENOMIC RNA]</scope>
</reference>
<reference key="4">
    <citation type="journal article" date="2004" name="Virus Res.">
        <title>Assembly and budding of influenza virus.</title>
        <authorList>
            <person name="Nayak D.P."/>
            <person name="Hui E.K."/>
            <person name="Barman S."/>
        </authorList>
    </citation>
    <scope>REVIEW</scope>
</reference>
<reference key="5">
    <citation type="journal article" date="2005" name="N. Engl. J. Med.">
        <title>Neuraminidase inhibitors for influenza.</title>
        <authorList>
            <person name="Moscona A."/>
        </authorList>
    </citation>
    <scope>REVIEW</scope>
</reference>
<reference key="6">
    <citation type="journal article" date="2005" name="Biol. Pharm. Bull.">
        <title>Sialobiology of influenza: molecular mechanism of host range variation of influenza viruses.</title>
        <authorList>
            <person name="Suzuki Y."/>
        </authorList>
    </citation>
    <scope>REVIEW</scope>
</reference>
<comment type="function">
    <text evidence="1">Catalyzes the removal of terminal sialic acid residues from viral and cellular glycoconjugates. Cleaves off the terminal sialic acids on the glycosylated HA during virus budding to facilitate virus release. Additionally helps virus spread through the circulation by further removing sialic acids from the cell surface. These cleavages prevent self-aggregation and ensure the efficient spread of the progeny virus from cell to cell. Otherwise, infection would be limited to one round of replication. Described as a receptor-destroying enzyme because it cleaves a terminal sialic acid from the cellular receptors. May facilitate viral invasion of the upper airways by cleaving the sialic acid moieties on the mucin of the airway epithelial cells. Likely to plays a role in the budding process through its association with lipid rafts during intracellular transport. May additionally display a raft-association independent effect on budding. Plays a role in the determination of host range restriction on replication and virulence. Sialidase activity in late endosome/lysosome traffic seems to enhance virus replication.</text>
</comment>
<comment type="catalytic activity">
    <reaction evidence="1">
        <text>Hydrolysis of alpha-(2-&gt;3)-, alpha-(2-&gt;6)-, alpha-(2-&gt;8)- glycosidic linkages of terminal sialic acid residues in oligosaccharides, glycoproteins, glycolipids, colominic acid and synthetic substrates.</text>
        <dbReference type="EC" id="3.2.1.18"/>
    </reaction>
</comment>
<comment type="cofactor">
    <cofactor evidence="1">
        <name>Ca(2+)</name>
        <dbReference type="ChEBI" id="CHEBI:29108"/>
    </cofactor>
</comment>
<comment type="activity regulation">
    <text evidence="1">Inhibited by the neuraminidase inhibitors zanamivir (Relenza) and oseltamivir (Tamiflu). These drugs interfere with the release of progeny virus from infected cells and are effective against all influenza strains. Resistance to neuraminidase inhibitors is quite rare.</text>
</comment>
<comment type="subunit">
    <text evidence="1">Homotetramer.</text>
</comment>
<comment type="subcellular location">
    <subcellularLocation>
        <location evidence="1">Virion membrane</location>
    </subcellularLocation>
    <subcellularLocation>
        <location evidence="1">Host apical cell membrane</location>
        <topology evidence="1">Single-pass type II membrane protein</topology>
    </subcellularLocation>
    <text evidence="1">Preferentially accumulates at the apical plasma membrane in infected polarized epithelial cells, which is the virus assembly site. Uses lipid rafts for cell surface transport and apical sorting. In the virion, forms a mushroom-shaped spike on the surface of the membrane.</text>
</comment>
<comment type="domain">
    <text evidence="1">Intact N-terminus is essential for virion morphogenesis. Possesses two apical sorting signals, one in the ectodomain, which is likely to be a glycan, and the other in the transmembrane domain. The transmembrane domain also plays a role in lipid raft association.</text>
</comment>
<comment type="PTM">
    <text evidence="1">N-glycosylated.</text>
</comment>
<comment type="miscellaneous">
    <text>The influenza A genome consist of 8 RNA segments. Genetic variation of hemagglutinin and/or neuraminidase genes results in the emergence of new influenza strains. The mechanism of variation can be the result of point mutations or the result of genetic reassortment between segments of two different strains.</text>
</comment>
<comment type="similarity">
    <text evidence="1">Belongs to the glycosyl hydrolase 34 family.</text>
</comment>
<comment type="sequence caution">
    <conflict type="erroneous initiation">
        <sequence resource="EMBL-CDS" id="AAC34264"/>
    </conflict>
</comment>
<accession>Q9W7Y7</accession>
<accession>O89527</accession>
<accession>Q9WA99</accession>
<feature type="chain" id="PRO_0000078700" description="Neuraminidase">
    <location>
        <begin position="1"/>
        <end position="450"/>
    </location>
</feature>
<feature type="topological domain" description="Intravirion" evidence="1">
    <location>
        <begin position="1"/>
        <end position="6"/>
    </location>
</feature>
<feature type="transmembrane region" description="Helical" evidence="1">
    <location>
        <begin position="7"/>
        <end position="27"/>
    </location>
</feature>
<feature type="topological domain" description="Virion surface" evidence="1">
    <location>
        <begin position="28"/>
        <end position="450"/>
    </location>
</feature>
<feature type="region of interest" description="Involved in apical transport and lipid raft association" evidence="1">
    <location>
        <begin position="11"/>
        <end position="33"/>
    </location>
</feature>
<feature type="region of interest" description="Hypervariable stalk region" evidence="1">
    <location>
        <begin position="36"/>
        <end position="71"/>
    </location>
</feature>
<feature type="region of interest" description="Head of neuraminidase" evidence="1">
    <location>
        <begin position="72"/>
        <end position="450"/>
    </location>
</feature>
<feature type="active site" description="Proton donor/acceptor" evidence="1">
    <location>
        <position position="132"/>
    </location>
</feature>
<feature type="active site" description="Nucleophile" evidence="1">
    <location>
        <position position="383"/>
    </location>
</feature>
<feature type="binding site" evidence="1">
    <location>
        <position position="99"/>
    </location>
    <ligand>
        <name>substrate</name>
    </ligand>
</feature>
<feature type="binding site" evidence="1">
    <location>
        <position position="133"/>
    </location>
    <ligand>
        <name>substrate</name>
    </ligand>
</feature>
<feature type="binding site" evidence="1">
    <location>
        <begin position="258"/>
        <end position="259"/>
    </location>
    <ligand>
        <name>substrate</name>
    </ligand>
</feature>
<feature type="binding site" evidence="1">
    <location>
        <position position="274"/>
    </location>
    <ligand>
        <name>substrate</name>
    </ligand>
</feature>
<feature type="binding site" evidence="1">
    <location>
        <position position="275"/>
    </location>
    <ligand>
        <name>Ca(2+)</name>
        <dbReference type="ChEBI" id="CHEBI:29108"/>
    </ligand>
</feature>
<feature type="binding site" evidence="1">
    <location>
        <position position="279"/>
    </location>
    <ligand>
        <name>Ca(2+)</name>
        <dbReference type="ChEBI" id="CHEBI:29108"/>
    </ligand>
</feature>
<feature type="binding site" evidence="1">
    <location>
        <position position="305"/>
    </location>
    <ligand>
        <name>Ca(2+)</name>
        <dbReference type="ChEBI" id="CHEBI:29108"/>
    </ligand>
</feature>
<feature type="binding site" evidence="1">
    <location>
        <position position="349"/>
    </location>
    <ligand>
        <name>substrate</name>
    </ligand>
</feature>
<feature type="glycosylation site" description="N-linked (GlcNAc...) asparagine; by host" evidence="1">
    <location>
        <position position="50"/>
    </location>
</feature>
<feature type="glycosylation site" description="N-linked (GlcNAc...) asparagine; by host" evidence="1">
    <location>
        <position position="69"/>
    </location>
</feature>
<feature type="glycosylation site" description="N-linked (GlcNAc...) asparagine; by host" evidence="1">
    <location>
        <position position="127"/>
    </location>
</feature>
<feature type="glycosylation site" description="N-linked (GlcNAc...) asparagine; by host" evidence="1">
    <location>
        <position position="216"/>
    </location>
</feature>
<feature type="disulfide bond" evidence="1">
    <location>
        <begin position="73"/>
        <end position="398"/>
    </location>
</feature>
<feature type="disulfide bond" evidence="1">
    <location>
        <begin position="105"/>
        <end position="110"/>
    </location>
</feature>
<feature type="disulfide bond" evidence="1">
    <location>
        <begin position="165"/>
        <end position="212"/>
    </location>
</feature>
<feature type="disulfide bond" evidence="1">
    <location>
        <begin position="214"/>
        <end position="219"/>
    </location>
</feature>
<feature type="disulfide bond" evidence="1">
    <location>
        <begin position="260"/>
        <end position="273"/>
    </location>
</feature>
<feature type="disulfide bond" evidence="1">
    <location>
        <begin position="262"/>
        <end position="271"/>
    </location>
</feature>
<feature type="disulfide bond" evidence="1">
    <location>
        <begin position="299"/>
        <end position="316"/>
    </location>
</feature>
<feature type="disulfide bond" evidence="1">
    <location>
        <begin position="402"/>
        <end position="427"/>
    </location>
</feature>
<feature type="sequence conflict" description="In Ref. 2; AAC34264." ref="2">
    <original>GAD</original>
    <variation>DAE</variation>
    <location>
        <begin position="441"/>
        <end position="443"/>
    </location>
</feature>
<feature type="sequence conflict" description="In Ref. 3; AAC32089." ref="3">
    <original>D</original>
    <variation>E</variation>
    <location>
        <position position="443"/>
    </location>
</feature>
<proteinExistence type="evidence at transcript level"/>
<dbReference type="EC" id="3.2.1.18" evidence="1"/>
<dbReference type="EMBL" id="AF028708">
    <property type="protein sequence ID" value="AAC40507.1"/>
    <property type="molecule type" value="mRNA"/>
</dbReference>
<dbReference type="EMBL" id="AF036357">
    <property type="protein sequence ID" value="AAC34264.1"/>
    <property type="status" value="ALT_INIT"/>
    <property type="molecule type" value="Genomic_RNA"/>
</dbReference>
<dbReference type="EMBL" id="AF046089">
    <property type="protein sequence ID" value="AAC32089.1"/>
    <property type="molecule type" value="Genomic_RNA"/>
</dbReference>
<dbReference type="SMR" id="Q9W7Y7"/>
<dbReference type="CAZy" id="GH34">
    <property type="family name" value="Glycoside Hydrolase Family 34"/>
</dbReference>
<dbReference type="GlyCosmos" id="Q9W7Y7">
    <property type="glycosylation" value="4 sites, No reported glycans"/>
</dbReference>
<dbReference type="Proteomes" id="UP000008587">
    <property type="component" value="Genome"/>
</dbReference>
<dbReference type="GO" id="GO:0020002">
    <property type="term" value="C:host cell plasma membrane"/>
    <property type="evidence" value="ECO:0007669"/>
    <property type="project" value="UniProtKB-SubCell"/>
</dbReference>
<dbReference type="GO" id="GO:0016020">
    <property type="term" value="C:membrane"/>
    <property type="evidence" value="ECO:0007669"/>
    <property type="project" value="UniProtKB-UniRule"/>
</dbReference>
<dbReference type="GO" id="GO:0055036">
    <property type="term" value="C:virion membrane"/>
    <property type="evidence" value="ECO:0007669"/>
    <property type="project" value="UniProtKB-SubCell"/>
</dbReference>
<dbReference type="GO" id="GO:0004308">
    <property type="term" value="F:exo-alpha-sialidase activity"/>
    <property type="evidence" value="ECO:0007669"/>
    <property type="project" value="UniProtKB-UniRule"/>
</dbReference>
<dbReference type="GO" id="GO:0046872">
    <property type="term" value="F:metal ion binding"/>
    <property type="evidence" value="ECO:0007669"/>
    <property type="project" value="UniProtKB-UniRule"/>
</dbReference>
<dbReference type="GO" id="GO:0005975">
    <property type="term" value="P:carbohydrate metabolic process"/>
    <property type="evidence" value="ECO:0007669"/>
    <property type="project" value="InterPro"/>
</dbReference>
<dbReference type="GO" id="GO:0046761">
    <property type="term" value="P:viral budding from plasma membrane"/>
    <property type="evidence" value="ECO:0007669"/>
    <property type="project" value="UniProtKB-UniRule"/>
</dbReference>
<dbReference type="CDD" id="cd15483">
    <property type="entry name" value="Influenza_NA"/>
    <property type="match status" value="1"/>
</dbReference>
<dbReference type="FunFam" id="2.120.10.10:FF:000001">
    <property type="entry name" value="Neuraminidase"/>
    <property type="match status" value="1"/>
</dbReference>
<dbReference type="Gene3D" id="2.120.10.10">
    <property type="match status" value="1"/>
</dbReference>
<dbReference type="HAMAP" id="MF_04071">
    <property type="entry name" value="INFV_NRAM"/>
    <property type="match status" value="1"/>
</dbReference>
<dbReference type="InterPro" id="IPR001860">
    <property type="entry name" value="Glyco_hydro_34"/>
</dbReference>
<dbReference type="InterPro" id="IPR033654">
    <property type="entry name" value="Sialidase_Influenza_A/B"/>
</dbReference>
<dbReference type="InterPro" id="IPR036278">
    <property type="entry name" value="Sialidase_sf"/>
</dbReference>
<dbReference type="Pfam" id="PF00064">
    <property type="entry name" value="Neur"/>
    <property type="match status" value="1"/>
</dbReference>
<dbReference type="SUPFAM" id="SSF50939">
    <property type="entry name" value="Sialidases"/>
    <property type="match status" value="1"/>
</dbReference>
<sequence>MNPNQKIITIGSICMVVGIISLMLQIGNIISVWVSHIIQTWHPNQPEPCNQSINFYTEQAAASVTLAGNSSLCPISGWAIYSKDNSIRIGSKGDVFVIREPFISCSHLECRTFFLTQGALLNDKHSNGTVKDRSPYRTLMSCPVGEAPSPYNSRFESVAWSASACHDGISWLTIGISGPDNGAVAVLKYNGIITDTIKSWRNNILRTQESECACVNGSCFTVMTDGPSNEQASYKIFKIEKGRVVKSVELNAPNYHYEECSCYPDAGEITCVCRDNWHGSNRPWVSFNQNLEYQIGYICSGVFGDSPRPNDGTGSCGPVSLNGAYGVKGFSFKYGNGVWIGRTKSTSSRSGFEMIWDPNGWTETDSSFSLKQDIIAITDWSGYSGSFIQHPELTGLNCMRPCFWVELIRGRPKEKTIWTSGSSISFCGVNSDTVGWSWPDGADLPFTIDK</sequence>
<evidence type="ECO:0000255" key="1">
    <source>
        <dbReference type="HAMAP-Rule" id="MF_04071"/>
    </source>
</evidence>
<organism>
    <name type="scientific">Influenza A virus (strain A/Hong Kong/156/1997 H5N1 genotype Gs/Gd)</name>
    <dbReference type="NCBI Taxonomy" id="130763"/>
    <lineage>
        <taxon>Viruses</taxon>
        <taxon>Riboviria</taxon>
        <taxon>Orthornavirae</taxon>
        <taxon>Negarnaviricota</taxon>
        <taxon>Polyploviricotina</taxon>
        <taxon>Insthoviricetes</taxon>
        <taxon>Articulavirales</taxon>
        <taxon>Orthomyxoviridae</taxon>
        <taxon>Alphainfluenzavirus</taxon>
        <taxon>Alphainfluenzavirus influenzae</taxon>
        <taxon>Influenza A virus</taxon>
    </lineage>
</organism>
<name>NRAM_I97A1</name>
<organismHost>
    <name type="scientific">Aves</name>
    <dbReference type="NCBI Taxonomy" id="8782"/>
</organismHost>
<organismHost>
    <name type="scientific">Felis catus</name>
    <name type="common">Cat</name>
    <name type="synonym">Felis silvestris catus</name>
    <dbReference type="NCBI Taxonomy" id="9685"/>
</organismHost>
<organismHost>
    <name type="scientific">Homo sapiens</name>
    <name type="common">Human</name>
    <dbReference type="NCBI Taxonomy" id="9606"/>
</organismHost>
<organismHost>
    <name type="scientific">Panthera pardus</name>
    <name type="common">Leopard</name>
    <name type="synonym">Felis pardus</name>
    <dbReference type="NCBI Taxonomy" id="9691"/>
</organismHost>
<organismHost>
    <name type="scientific">Panthera tigris</name>
    <name type="common">Tiger</name>
    <dbReference type="NCBI Taxonomy" id="9694"/>
</organismHost>
<organismHost>
    <name type="scientific">Sus scrofa</name>
    <name type="common">Pig</name>
    <dbReference type="NCBI Taxonomy" id="9823"/>
</organismHost>
<gene>
    <name evidence="1" type="primary">NA</name>
</gene>